<feature type="signal peptide" evidence="2">
    <location>
        <begin position="1"/>
        <end position="22"/>
    </location>
</feature>
<feature type="peptide" id="PRO_0000432594" description="Antimicrobial peptide AcrAP2">
    <location>
        <begin position="23"/>
        <end position="40"/>
    </location>
</feature>
<feature type="propeptide" id="PRO_0000432595" evidence="2">
    <location>
        <begin position="46"/>
        <end position="74"/>
    </location>
</feature>
<feature type="modified residue" description="Lysine amide" evidence="2">
    <location>
        <position position="40"/>
    </location>
</feature>
<feature type="mutagenesis site" description="Shows important increase in antimicrobial activity against E.coli (MIC=8 uM) and slight increase against S.aureus (MIC=4 uM) and C.albicans (MIC=4 uM), as well as slight increase in hemolytic activity (32 uM for 100% hemolysis). Also shows anti-proliferative effects on four cancer cell lines; when associated with K-30; K-33 and K-37." evidence="2">
    <original>S</original>
    <variation>K</variation>
    <location>
        <position position="26"/>
    </location>
</feature>
<feature type="mutagenesis site" description="Shows important increase in antimicrobial activity against E.coli (MIC=8 uM) and slight increase against S.aureus (MIC=4 uM) and C.albicans (MIC=4 uM), as well as slight increase in hemolytic activity (32 uM for 100% hemolysis). Also shows anti-proliferative effects on four cancer cell lines; when associated with K-26; K-33 and K-37." evidence="2">
    <original>N</original>
    <variation>K</variation>
    <location>
        <position position="30"/>
    </location>
</feature>
<feature type="mutagenesis site" description="Shows important increase in antimicrobial activity against E.coli (MIC=8 uM) and slight increase against S.aureus (MIC=4 uM) and C.albicans (MIC=4 uM), as well as slight increase in hemolytic activity (32 uM for 100% hemolysis). Also shows anti-proliferative effects on four cancer cell lines; when associated with K-26; K-30 and K-37." evidence="2">
    <original>S</original>
    <variation>K</variation>
    <location>
        <position position="33"/>
    </location>
</feature>
<feature type="mutagenesis site" description="Shows important increase in antimicrobial activity against E.coli (MIC=8 uM) and slight increase against S.aureus (MIC=4 uM) and C.albicans (MIC=4 uM), as well as slight increase in hemolytic activity (32 uM for 100% hemolysis). Also shows anti-proliferative effects on four cancer cell lines; when associated with K-26; K-30 and K-33." evidence="2">
    <original>S</original>
    <variation>K</variation>
    <location>
        <position position="37"/>
    </location>
</feature>
<name>NDB4T_ANDCR</name>
<reference key="1">
    <citation type="journal article" date="2014" name="Int. J. Biol. Sci.">
        <title>Cationicity-enhanced analogues of the antimicrobial peptides, AcrAP1 and AcrAP2, from the venom of the scorpion, Androctonus crassicauda, display potent growth modulation effects on human cancer cell lines.</title>
        <authorList>
            <person name="Du Q."/>
            <person name="Hou X."/>
            <person name="Ge L."/>
            <person name="Li R."/>
            <person name="Zhou M."/>
            <person name="Wang H."/>
            <person name="Wang L."/>
            <person name="Wei M."/>
            <person name="Chen T."/>
            <person name="Shaw C."/>
        </authorList>
    </citation>
    <scope>NUCLEOTIDE SEQUENCE [MRNA]</scope>
    <scope>MASS SPECTROMETRY</scope>
    <scope>SYNTHESIS OF 23-40</scope>
    <scope>FUNCTION</scope>
    <scope>MUTAGENESIS OF SER-26; ASN-30; SER-33 AND SER-37</scope>
    <scope>AMIDATION AT LYS-40</scope>
    <source>
        <tissue>Venom</tissue>
        <tissue>Venom gland</tissue>
    </source>
</reference>
<proteinExistence type="evidence at protein level"/>
<comment type="function">
    <text evidence="2">Has antimicrobial activity against the Gram-positive bacteria S.aureus (MIC=8 uM) and the yeast C.albicans (MIC=16 uM). Causes hemolysis on horse erythrocytes (64 uM for 100% hemolysis). Minimum bactericidal concentrations have also been tested against S.aureus and is four-fold higher (MBC=32 uM).</text>
</comment>
<comment type="subcellular location">
    <subcellularLocation>
        <location evidence="2">Secreted</location>
    </subcellularLocation>
    <subcellularLocation>
        <location evidence="1">Target cell membrane</location>
    </subcellularLocation>
    <text evidence="1">Forms a helical membrane channel in the prey.</text>
</comment>
<comment type="tissue specificity">
    <text evidence="3">Expressed by the venom gland.</text>
</comment>
<comment type="mass spectrometry"/>
<comment type="miscellaneous">
    <text evidence="2">Negative results: does not show antimicrobial activity against the Gram-negative bacteria E.coli (MIC&gt;250 uM). Does not show effect on four different human cancer cell lines.</text>
</comment>
<comment type="similarity">
    <text evidence="3">Belongs to the non-disulfide-bridged peptide (NDBP) superfamily. Short antimicrobial peptide (group 4) family.</text>
</comment>
<protein>
    <recommendedName>
        <fullName>Antimicrobial peptide AcrAP2</fullName>
    </recommendedName>
</protein>
<sequence>MEIKYLLTVFLVLLIVSDHCQAFLFSLIPNAISGLLSAFKGRRKRNLDGQIDRFRNFRKRDAELEELLSKLPIY</sequence>
<keyword id="KW-0027">Amidation</keyword>
<keyword id="KW-0044">Antibiotic</keyword>
<keyword id="KW-0929">Antimicrobial</keyword>
<keyword id="KW-0165">Cleavage on pair of basic residues</keyword>
<keyword id="KW-0295">Fungicide</keyword>
<keyword id="KW-0472">Membrane</keyword>
<keyword id="KW-0964">Secreted</keyword>
<keyword id="KW-0732">Signal</keyword>
<keyword id="KW-1052">Target cell membrane</keyword>
<keyword id="KW-1053">Target membrane</keyword>
<accession>A0A0A1I6N9</accession>
<evidence type="ECO:0000250" key="1"/>
<evidence type="ECO:0000269" key="2">
    <source>
    </source>
</evidence>
<evidence type="ECO:0000305" key="3"/>
<dbReference type="EMBL" id="HG939519">
    <property type="protein sequence ID" value="CDN67528.1"/>
    <property type="molecule type" value="mRNA"/>
</dbReference>
<dbReference type="SMR" id="A0A0A1I6N9"/>
<dbReference type="GO" id="GO:0005576">
    <property type="term" value="C:extracellular region"/>
    <property type="evidence" value="ECO:0007669"/>
    <property type="project" value="UniProtKB-SubCell"/>
</dbReference>
<dbReference type="GO" id="GO:0016020">
    <property type="term" value="C:membrane"/>
    <property type="evidence" value="ECO:0007669"/>
    <property type="project" value="UniProtKB-KW"/>
</dbReference>
<dbReference type="GO" id="GO:0044218">
    <property type="term" value="C:other organism cell membrane"/>
    <property type="evidence" value="ECO:0007669"/>
    <property type="project" value="UniProtKB-KW"/>
</dbReference>
<dbReference type="GO" id="GO:0042742">
    <property type="term" value="P:defense response to bacterium"/>
    <property type="evidence" value="ECO:0007669"/>
    <property type="project" value="UniProtKB-KW"/>
</dbReference>
<dbReference type="GO" id="GO:0050832">
    <property type="term" value="P:defense response to fungus"/>
    <property type="evidence" value="ECO:0007669"/>
    <property type="project" value="UniProtKB-KW"/>
</dbReference>
<dbReference type="GO" id="GO:0031640">
    <property type="term" value="P:killing of cells of another organism"/>
    <property type="evidence" value="ECO:0007669"/>
    <property type="project" value="UniProtKB-KW"/>
</dbReference>
<organism>
    <name type="scientific">Androctonus crassicauda</name>
    <name type="common">Arabian fat-tailed scorpion</name>
    <dbReference type="NCBI Taxonomy" id="122909"/>
    <lineage>
        <taxon>Eukaryota</taxon>
        <taxon>Metazoa</taxon>
        <taxon>Ecdysozoa</taxon>
        <taxon>Arthropoda</taxon>
        <taxon>Chelicerata</taxon>
        <taxon>Arachnida</taxon>
        <taxon>Scorpiones</taxon>
        <taxon>Buthida</taxon>
        <taxon>Buthoidea</taxon>
        <taxon>Buthidae</taxon>
        <taxon>Androctonus</taxon>
    </lineage>
</organism>